<protein>
    <recommendedName>
        <fullName>Uncharacterized protein CPE0383</fullName>
    </recommendedName>
</protein>
<organism>
    <name type="scientific">Clostridium perfringens (strain 13 / Type A)</name>
    <dbReference type="NCBI Taxonomy" id="195102"/>
    <lineage>
        <taxon>Bacteria</taxon>
        <taxon>Bacillati</taxon>
        <taxon>Bacillota</taxon>
        <taxon>Clostridia</taxon>
        <taxon>Eubacteriales</taxon>
        <taxon>Clostridiaceae</taxon>
        <taxon>Clostridium</taxon>
    </lineage>
</organism>
<feature type="chain" id="PRO_0000172863" description="Uncharacterized protein CPE0383">
    <location>
        <begin position="1"/>
        <end position="135"/>
    </location>
</feature>
<feature type="transmembrane region" description="Helical" evidence="1">
    <location>
        <begin position="4"/>
        <end position="24"/>
    </location>
</feature>
<feature type="transmembrane region" description="Helical" evidence="1">
    <location>
        <begin position="26"/>
        <end position="46"/>
    </location>
</feature>
<feature type="transmembrane region" description="Helical" evidence="1">
    <location>
        <begin position="68"/>
        <end position="88"/>
    </location>
</feature>
<feature type="transmembrane region" description="Helical" evidence="1">
    <location>
        <begin position="93"/>
        <end position="113"/>
    </location>
</feature>
<sequence>MEGIIICIKLGVVFLGTLFTWIFGAWDMPIVTLLVFIFLDYLTGVIKGCKSKELCSNIGLRGITKKGLILVVLLVAVMLDRLLDNGAWMFRTLIAYFYIMNEGISILENCAALGVPIPEFLRQALKQLNNKNNIK</sequence>
<gene>
    <name type="ordered locus">CPE0383</name>
</gene>
<accession>P58701</accession>
<name>Y383_CLOPE</name>
<dbReference type="EMBL" id="BA000016">
    <property type="protein sequence ID" value="BAB80089.1"/>
    <property type="molecule type" value="Genomic_DNA"/>
</dbReference>
<dbReference type="RefSeq" id="WP_011009776.1">
    <property type="nucleotide sequence ID" value="NC_003366.1"/>
</dbReference>
<dbReference type="STRING" id="195102.gene:10489639"/>
<dbReference type="KEGG" id="cpe:CPE0383"/>
<dbReference type="HOGENOM" id="CLU_125939_0_0_9"/>
<dbReference type="Proteomes" id="UP000000818">
    <property type="component" value="Chromosome"/>
</dbReference>
<dbReference type="GO" id="GO:0005886">
    <property type="term" value="C:plasma membrane"/>
    <property type="evidence" value="ECO:0007669"/>
    <property type="project" value="UniProtKB-SubCell"/>
</dbReference>
<dbReference type="InterPro" id="IPR006480">
    <property type="entry name" value="Phage_holin_4_1"/>
</dbReference>
<dbReference type="NCBIfam" id="TIGR01593">
    <property type="entry name" value="holin_tox_secr"/>
    <property type="match status" value="1"/>
</dbReference>
<dbReference type="Pfam" id="PF05105">
    <property type="entry name" value="Phage_holin_4_1"/>
    <property type="match status" value="1"/>
</dbReference>
<comment type="subcellular location">
    <subcellularLocation>
        <location evidence="2">Cell membrane</location>
        <topology evidence="2">Multi-pass membrane protein</topology>
    </subcellularLocation>
</comment>
<comment type="similarity">
    <text evidence="2">Belongs to the bacteriophage holin family. Cp-1 holin subfamily.</text>
</comment>
<proteinExistence type="inferred from homology"/>
<keyword id="KW-1003">Cell membrane</keyword>
<keyword id="KW-0472">Membrane</keyword>
<keyword id="KW-1185">Reference proteome</keyword>
<keyword id="KW-0812">Transmembrane</keyword>
<keyword id="KW-1133">Transmembrane helix</keyword>
<reference key="1">
    <citation type="journal article" date="2002" name="Proc. Natl. Acad. Sci. U.S.A.">
        <title>Complete genome sequence of Clostridium perfringens, an anaerobic flesh-eater.</title>
        <authorList>
            <person name="Shimizu T."/>
            <person name="Ohtani K."/>
            <person name="Hirakawa H."/>
            <person name="Ohshima K."/>
            <person name="Yamashita A."/>
            <person name="Shiba T."/>
            <person name="Ogasawara N."/>
            <person name="Hattori M."/>
            <person name="Kuhara S."/>
            <person name="Hayashi H."/>
        </authorList>
    </citation>
    <scope>NUCLEOTIDE SEQUENCE [LARGE SCALE GENOMIC DNA]</scope>
    <source>
        <strain>13 / Type A</strain>
    </source>
</reference>
<evidence type="ECO:0000255" key="1"/>
<evidence type="ECO:0000305" key="2"/>